<proteinExistence type="inferred from homology"/>
<protein>
    <recommendedName>
        <fullName evidence="1">Large ribosomal subunit protein bL35</fullName>
    </recommendedName>
    <alternativeName>
        <fullName evidence="2">50S ribosomal protein L35</fullName>
    </alternativeName>
</protein>
<evidence type="ECO:0000255" key="1">
    <source>
        <dbReference type="HAMAP-Rule" id="MF_00514"/>
    </source>
</evidence>
<evidence type="ECO:0000305" key="2"/>
<gene>
    <name evidence="1" type="primary">rpmI</name>
    <name type="ordered locus">LEPBI_I2399</name>
</gene>
<organism>
    <name type="scientific">Leptospira biflexa serovar Patoc (strain Patoc 1 / ATCC 23582 / Paris)</name>
    <dbReference type="NCBI Taxonomy" id="456481"/>
    <lineage>
        <taxon>Bacteria</taxon>
        <taxon>Pseudomonadati</taxon>
        <taxon>Spirochaetota</taxon>
        <taxon>Spirochaetia</taxon>
        <taxon>Leptospirales</taxon>
        <taxon>Leptospiraceae</taxon>
        <taxon>Leptospira</taxon>
    </lineage>
</organism>
<dbReference type="EMBL" id="CP000786">
    <property type="protein sequence ID" value="ABZ98489.1"/>
    <property type="molecule type" value="Genomic_DNA"/>
</dbReference>
<dbReference type="RefSeq" id="WP_002975302.1">
    <property type="nucleotide sequence ID" value="NC_010602.1"/>
</dbReference>
<dbReference type="SMR" id="B0SKZ6"/>
<dbReference type="STRING" id="456481.LEPBI_I2399"/>
<dbReference type="KEGG" id="lbi:LEPBI_I2399"/>
<dbReference type="HOGENOM" id="CLU_169643_4_3_12"/>
<dbReference type="OrthoDB" id="47476at2"/>
<dbReference type="BioCyc" id="LBIF456481:LEPBI_RS11845-MONOMER"/>
<dbReference type="Proteomes" id="UP000001847">
    <property type="component" value="Chromosome I"/>
</dbReference>
<dbReference type="GO" id="GO:0022625">
    <property type="term" value="C:cytosolic large ribosomal subunit"/>
    <property type="evidence" value="ECO:0007669"/>
    <property type="project" value="TreeGrafter"/>
</dbReference>
<dbReference type="GO" id="GO:0003735">
    <property type="term" value="F:structural constituent of ribosome"/>
    <property type="evidence" value="ECO:0007669"/>
    <property type="project" value="InterPro"/>
</dbReference>
<dbReference type="GO" id="GO:0006412">
    <property type="term" value="P:translation"/>
    <property type="evidence" value="ECO:0007669"/>
    <property type="project" value="UniProtKB-UniRule"/>
</dbReference>
<dbReference type="FunFam" id="4.10.410.60:FF:000001">
    <property type="entry name" value="50S ribosomal protein L35"/>
    <property type="match status" value="1"/>
</dbReference>
<dbReference type="Gene3D" id="4.10.410.60">
    <property type="match status" value="1"/>
</dbReference>
<dbReference type="HAMAP" id="MF_00514">
    <property type="entry name" value="Ribosomal_bL35"/>
    <property type="match status" value="1"/>
</dbReference>
<dbReference type="InterPro" id="IPR001706">
    <property type="entry name" value="Ribosomal_bL35"/>
</dbReference>
<dbReference type="InterPro" id="IPR021137">
    <property type="entry name" value="Ribosomal_bL35-like"/>
</dbReference>
<dbReference type="InterPro" id="IPR018265">
    <property type="entry name" value="Ribosomal_bL35_CS"/>
</dbReference>
<dbReference type="InterPro" id="IPR037229">
    <property type="entry name" value="Ribosomal_bL35_sf"/>
</dbReference>
<dbReference type="NCBIfam" id="TIGR00001">
    <property type="entry name" value="rpmI_bact"/>
    <property type="match status" value="1"/>
</dbReference>
<dbReference type="PANTHER" id="PTHR33343">
    <property type="entry name" value="54S RIBOSOMAL PROTEIN BL35M"/>
    <property type="match status" value="1"/>
</dbReference>
<dbReference type="PANTHER" id="PTHR33343:SF1">
    <property type="entry name" value="LARGE RIBOSOMAL SUBUNIT PROTEIN BL35M"/>
    <property type="match status" value="1"/>
</dbReference>
<dbReference type="Pfam" id="PF01632">
    <property type="entry name" value="Ribosomal_L35p"/>
    <property type="match status" value="1"/>
</dbReference>
<dbReference type="PRINTS" id="PR00064">
    <property type="entry name" value="RIBOSOMALL35"/>
</dbReference>
<dbReference type="SUPFAM" id="SSF143034">
    <property type="entry name" value="L35p-like"/>
    <property type="match status" value="1"/>
</dbReference>
<dbReference type="PROSITE" id="PS00936">
    <property type="entry name" value="RIBOSOMAL_L35"/>
    <property type="match status" value="1"/>
</dbReference>
<feature type="chain" id="PRO_1000127370" description="Large ribosomal subunit protein bL35">
    <location>
        <begin position="1"/>
        <end position="66"/>
    </location>
</feature>
<comment type="similarity">
    <text evidence="1">Belongs to the bacterial ribosomal protein bL35 family.</text>
</comment>
<accession>B0SKZ6</accession>
<keyword id="KW-1185">Reference proteome</keyword>
<keyword id="KW-0687">Ribonucleoprotein</keyword>
<keyword id="KW-0689">Ribosomal protein</keyword>
<name>RL35_LEPBP</name>
<sequence>MYKLKTNRAAAKRFKFTKSGKIKRGCAFRRHILEKKSPKMKHQSRGMHVIHETDYNRVEKLLPYGG</sequence>
<reference key="1">
    <citation type="journal article" date="2008" name="PLoS ONE">
        <title>Genome sequence of the saprophyte Leptospira biflexa provides insights into the evolution of Leptospira and the pathogenesis of leptospirosis.</title>
        <authorList>
            <person name="Picardeau M."/>
            <person name="Bulach D.M."/>
            <person name="Bouchier C."/>
            <person name="Zuerner R.L."/>
            <person name="Zidane N."/>
            <person name="Wilson P.J."/>
            <person name="Creno S."/>
            <person name="Kuczek E.S."/>
            <person name="Bommezzadri S."/>
            <person name="Davis J.C."/>
            <person name="McGrath A."/>
            <person name="Johnson M.J."/>
            <person name="Boursaux-Eude C."/>
            <person name="Seemann T."/>
            <person name="Rouy Z."/>
            <person name="Coppel R.L."/>
            <person name="Rood J.I."/>
            <person name="Lajus A."/>
            <person name="Davies J.K."/>
            <person name="Medigue C."/>
            <person name="Adler B."/>
        </authorList>
    </citation>
    <scope>NUCLEOTIDE SEQUENCE [LARGE SCALE GENOMIC DNA]</scope>
    <source>
        <strain>Patoc 1 / ATCC 23582 / Paris</strain>
    </source>
</reference>